<feature type="chain" id="PRO_1000093818" description="Translation initiation factor IF-2">
    <location>
        <begin position="1"/>
        <end position="892"/>
    </location>
</feature>
<feature type="domain" description="tr-type G">
    <location>
        <begin position="391"/>
        <end position="560"/>
    </location>
</feature>
<feature type="region of interest" description="Disordered" evidence="3">
    <location>
        <begin position="88"/>
        <end position="305"/>
    </location>
</feature>
<feature type="region of interest" description="G1" evidence="1">
    <location>
        <begin position="400"/>
        <end position="407"/>
    </location>
</feature>
<feature type="region of interest" description="G2" evidence="1">
    <location>
        <begin position="425"/>
        <end position="429"/>
    </location>
</feature>
<feature type="region of interest" description="G3" evidence="1">
    <location>
        <begin position="446"/>
        <end position="449"/>
    </location>
</feature>
<feature type="region of interest" description="G4" evidence="1">
    <location>
        <begin position="500"/>
        <end position="503"/>
    </location>
</feature>
<feature type="region of interest" description="G5" evidence="1">
    <location>
        <begin position="536"/>
        <end position="538"/>
    </location>
</feature>
<feature type="compositionally biased region" description="Basic and acidic residues" evidence="3">
    <location>
        <begin position="93"/>
        <end position="159"/>
    </location>
</feature>
<feature type="compositionally biased region" description="Basic and acidic residues" evidence="3">
    <location>
        <begin position="166"/>
        <end position="216"/>
    </location>
</feature>
<feature type="compositionally biased region" description="Basic residues" evidence="3">
    <location>
        <begin position="254"/>
        <end position="269"/>
    </location>
</feature>
<feature type="compositionally biased region" description="Basic and acidic residues" evidence="3">
    <location>
        <begin position="270"/>
        <end position="282"/>
    </location>
</feature>
<feature type="binding site" evidence="2">
    <location>
        <begin position="400"/>
        <end position="407"/>
    </location>
    <ligand>
        <name>GTP</name>
        <dbReference type="ChEBI" id="CHEBI:37565"/>
    </ligand>
</feature>
<feature type="binding site" evidence="2">
    <location>
        <begin position="446"/>
        <end position="450"/>
    </location>
    <ligand>
        <name>GTP</name>
        <dbReference type="ChEBI" id="CHEBI:37565"/>
    </ligand>
</feature>
<feature type="binding site" evidence="2">
    <location>
        <begin position="500"/>
        <end position="503"/>
    </location>
    <ligand>
        <name>GTP</name>
        <dbReference type="ChEBI" id="CHEBI:37565"/>
    </ligand>
</feature>
<sequence>MTDVTLKALAAERQVSVDRLVQQFADAGIRKSADDSVSAQEKQTLLAHLNREAVSGPDKLTLQRKTRSTLNIPGTGGKSKSVQIEVRKKRTFVKRDPQEAERLAAEEQAQREAEEQARREAEEQAKREAQQKAEREAAEQAKREAAEKAKREAAEKDKVSNQQTDDMTKTAQAEKARRENEAAELKRKAEEEARRKLEEEARRVAEEARRMAEENKWTATPEPVEDTSDYHVTTSQHARQAEDENDREVEGGRGRGRNAKAARPAKKGKHAESKADREEARAAVRGGKGGKRKGSSLQQGFQKPAQAVNRDVVIGETITVGELANKMAVKGSQVIKAMMKLGAMATINQVIDQETAQLVAEEMGHKVILRRENELEEAVMSDRDTGAAAEPRAPVVTIMGHVDHGKTSLLDYIRSTKVASGEAGGITQHIGAYHVETDNGMITFLDTPGHAAFTSMRARGAQATDIVVLVVAADDGVMPQTIEAIQHAKAAGVPVVVAVNKIDKPEADPDRVKNELSQYGILPEEWGGESQFVHVSAKAGTGIDELLDAILLQAEVLELKAVRKGMASGAVIESFLDKGRGPVATVLVREGTLHKGDIVLCGFEYGRVRAMRNELGQEVLEAGPSIPVEILGLSGVPAAGDEVTVVRDEKKAREVALYRQGKFREVKLARQQKSKLENMFANMTEGEVHEVNIVLKADVQGSVEAISDSLLKLSTDEVKVKIIGSGVGGITETDATLAAASNAILVGFNVRADASARKVIESESLDLRYYSVIYNLIDEVKAAMSGMLSPELKQQIIGLAEVRDVFKSPKFGAIAGCMVTEGTIKRHNPIRVLRDNVVIYEGELESLRRFKDDVNEVRNGMECGIGVKNYNDVRVGDMIEVFEIIEIQRTIA</sequence>
<dbReference type="EMBL" id="CP001144">
    <property type="protein sequence ID" value="ACH74199.1"/>
    <property type="molecule type" value="Genomic_DNA"/>
</dbReference>
<dbReference type="RefSeq" id="WP_000133064.1">
    <property type="nucleotide sequence ID" value="NC_011205.1"/>
</dbReference>
<dbReference type="SMR" id="B5FI13"/>
<dbReference type="KEGG" id="sed:SeD_A3643"/>
<dbReference type="HOGENOM" id="CLU_006301_6_3_6"/>
<dbReference type="Proteomes" id="UP000008322">
    <property type="component" value="Chromosome"/>
</dbReference>
<dbReference type="GO" id="GO:0005829">
    <property type="term" value="C:cytosol"/>
    <property type="evidence" value="ECO:0007669"/>
    <property type="project" value="TreeGrafter"/>
</dbReference>
<dbReference type="GO" id="GO:0005525">
    <property type="term" value="F:GTP binding"/>
    <property type="evidence" value="ECO:0007669"/>
    <property type="project" value="UniProtKB-KW"/>
</dbReference>
<dbReference type="GO" id="GO:0003924">
    <property type="term" value="F:GTPase activity"/>
    <property type="evidence" value="ECO:0007669"/>
    <property type="project" value="UniProtKB-UniRule"/>
</dbReference>
<dbReference type="GO" id="GO:0097216">
    <property type="term" value="F:guanosine tetraphosphate binding"/>
    <property type="evidence" value="ECO:0007669"/>
    <property type="project" value="UniProtKB-ARBA"/>
</dbReference>
<dbReference type="GO" id="GO:0003743">
    <property type="term" value="F:translation initiation factor activity"/>
    <property type="evidence" value="ECO:0007669"/>
    <property type="project" value="UniProtKB-UniRule"/>
</dbReference>
<dbReference type="CDD" id="cd01887">
    <property type="entry name" value="IF2_eIF5B"/>
    <property type="match status" value="1"/>
</dbReference>
<dbReference type="CDD" id="cd03702">
    <property type="entry name" value="IF2_mtIF2_II"/>
    <property type="match status" value="1"/>
</dbReference>
<dbReference type="CDD" id="cd03692">
    <property type="entry name" value="mtIF2_IVc"/>
    <property type="match status" value="1"/>
</dbReference>
<dbReference type="FunFam" id="2.40.30.10:FF:000007">
    <property type="entry name" value="Translation initiation factor IF-2"/>
    <property type="match status" value="1"/>
</dbReference>
<dbReference type="FunFam" id="2.40.30.10:FF:000008">
    <property type="entry name" value="Translation initiation factor IF-2"/>
    <property type="match status" value="1"/>
</dbReference>
<dbReference type="FunFam" id="3.30.56.50:FF:000001">
    <property type="entry name" value="Translation initiation factor IF-2"/>
    <property type="match status" value="1"/>
</dbReference>
<dbReference type="FunFam" id="3.40.50.10050:FF:000001">
    <property type="entry name" value="Translation initiation factor IF-2"/>
    <property type="match status" value="1"/>
</dbReference>
<dbReference type="FunFam" id="3.40.50.300:FF:000019">
    <property type="entry name" value="Translation initiation factor IF-2"/>
    <property type="match status" value="1"/>
</dbReference>
<dbReference type="Gene3D" id="3.40.50.300">
    <property type="entry name" value="P-loop containing nucleotide triphosphate hydrolases"/>
    <property type="match status" value="1"/>
</dbReference>
<dbReference type="Gene3D" id="3.30.56.50">
    <property type="entry name" value="Putative DNA-binding domain, N-terminal subdomain of bacterial translation initiation factor IF2"/>
    <property type="match status" value="1"/>
</dbReference>
<dbReference type="Gene3D" id="2.40.30.10">
    <property type="entry name" value="Translation factors"/>
    <property type="match status" value="2"/>
</dbReference>
<dbReference type="Gene3D" id="3.40.50.10050">
    <property type="entry name" value="Translation initiation factor IF- 2, domain 3"/>
    <property type="match status" value="1"/>
</dbReference>
<dbReference type="HAMAP" id="MF_00100_B">
    <property type="entry name" value="IF_2_B"/>
    <property type="match status" value="1"/>
</dbReference>
<dbReference type="InterPro" id="IPR009061">
    <property type="entry name" value="DNA-bd_dom_put_sf"/>
</dbReference>
<dbReference type="InterPro" id="IPR053905">
    <property type="entry name" value="EF-G-like_DII"/>
</dbReference>
<dbReference type="InterPro" id="IPR004161">
    <property type="entry name" value="EFTu-like_2"/>
</dbReference>
<dbReference type="InterPro" id="IPR013575">
    <property type="entry name" value="IF2_assoc_dom_bac"/>
</dbReference>
<dbReference type="InterPro" id="IPR044145">
    <property type="entry name" value="IF2_II"/>
</dbReference>
<dbReference type="InterPro" id="IPR006847">
    <property type="entry name" value="IF2_N"/>
</dbReference>
<dbReference type="InterPro" id="IPR027417">
    <property type="entry name" value="P-loop_NTPase"/>
</dbReference>
<dbReference type="InterPro" id="IPR005225">
    <property type="entry name" value="Small_GTP-bd"/>
</dbReference>
<dbReference type="InterPro" id="IPR000795">
    <property type="entry name" value="T_Tr_GTP-bd_dom"/>
</dbReference>
<dbReference type="InterPro" id="IPR000178">
    <property type="entry name" value="TF_IF2_bacterial-like"/>
</dbReference>
<dbReference type="InterPro" id="IPR015760">
    <property type="entry name" value="TIF_IF2"/>
</dbReference>
<dbReference type="InterPro" id="IPR023115">
    <property type="entry name" value="TIF_IF2_dom3"/>
</dbReference>
<dbReference type="InterPro" id="IPR036925">
    <property type="entry name" value="TIF_IF2_dom3_sf"/>
</dbReference>
<dbReference type="InterPro" id="IPR009000">
    <property type="entry name" value="Transl_B-barrel_sf"/>
</dbReference>
<dbReference type="NCBIfam" id="TIGR00487">
    <property type="entry name" value="IF-2"/>
    <property type="match status" value="1"/>
</dbReference>
<dbReference type="NCBIfam" id="TIGR00231">
    <property type="entry name" value="small_GTP"/>
    <property type="match status" value="1"/>
</dbReference>
<dbReference type="PANTHER" id="PTHR43381:SF5">
    <property type="entry name" value="TR-TYPE G DOMAIN-CONTAINING PROTEIN"/>
    <property type="match status" value="1"/>
</dbReference>
<dbReference type="PANTHER" id="PTHR43381">
    <property type="entry name" value="TRANSLATION INITIATION FACTOR IF-2-RELATED"/>
    <property type="match status" value="1"/>
</dbReference>
<dbReference type="Pfam" id="PF22042">
    <property type="entry name" value="EF-G_D2"/>
    <property type="match status" value="1"/>
</dbReference>
<dbReference type="Pfam" id="PF00009">
    <property type="entry name" value="GTP_EFTU"/>
    <property type="match status" value="1"/>
</dbReference>
<dbReference type="Pfam" id="PF03144">
    <property type="entry name" value="GTP_EFTU_D2"/>
    <property type="match status" value="1"/>
</dbReference>
<dbReference type="Pfam" id="PF11987">
    <property type="entry name" value="IF-2"/>
    <property type="match status" value="1"/>
</dbReference>
<dbReference type="Pfam" id="PF08364">
    <property type="entry name" value="IF2_assoc"/>
    <property type="match status" value="1"/>
</dbReference>
<dbReference type="Pfam" id="PF04760">
    <property type="entry name" value="IF2_N"/>
    <property type="match status" value="2"/>
</dbReference>
<dbReference type="SUPFAM" id="SSF52156">
    <property type="entry name" value="Initiation factor IF2/eIF5b, domain 3"/>
    <property type="match status" value="1"/>
</dbReference>
<dbReference type="SUPFAM" id="SSF52540">
    <property type="entry name" value="P-loop containing nucleoside triphosphate hydrolases"/>
    <property type="match status" value="1"/>
</dbReference>
<dbReference type="SUPFAM" id="SSF46955">
    <property type="entry name" value="Putative DNA-binding domain"/>
    <property type="match status" value="1"/>
</dbReference>
<dbReference type="SUPFAM" id="SSF50447">
    <property type="entry name" value="Translation proteins"/>
    <property type="match status" value="2"/>
</dbReference>
<dbReference type="PROSITE" id="PS51722">
    <property type="entry name" value="G_TR_2"/>
    <property type="match status" value="1"/>
</dbReference>
<dbReference type="PROSITE" id="PS01176">
    <property type="entry name" value="IF2"/>
    <property type="match status" value="1"/>
</dbReference>
<comment type="function">
    <text evidence="2">One of the essential components for the initiation of protein synthesis. Protects formylmethionyl-tRNA from spontaneous hydrolysis and promotes its binding to the 30S ribosomal subunits. Also involved in the hydrolysis of GTP during the formation of the 70S ribosomal complex.</text>
</comment>
<comment type="subcellular location">
    <subcellularLocation>
        <location evidence="2">Cytoplasm</location>
    </subcellularLocation>
</comment>
<comment type="similarity">
    <text evidence="2">Belongs to the TRAFAC class translation factor GTPase superfamily. Classic translation factor GTPase family. IF-2 subfamily.</text>
</comment>
<name>IF2_SALDC</name>
<reference key="1">
    <citation type="journal article" date="2011" name="J. Bacteriol.">
        <title>Comparative genomics of 28 Salmonella enterica isolates: evidence for CRISPR-mediated adaptive sublineage evolution.</title>
        <authorList>
            <person name="Fricke W.F."/>
            <person name="Mammel M.K."/>
            <person name="McDermott P.F."/>
            <person name="Tartera C."/>
            <person name="White D.G."/>
            <person name="Leclerc J.E."/>
            <person name="Ravel J."/>
            <person name="Cebula T.A."/>
        </authorList>
    </citation>
    <scope>NUCLEOTIDE SEQUENCE [LARGE SCALE GENOMIC DNA]</scope>
    <source>
        <strain>CT_02021853</strain>
    </source>
</reference>
<accession>B5FI13</accession>
<proteinExistence type="inferred from homology"/>
<organism>
    <name type="scientific">Salmonella dublin (strain CT_02021853)</name>
    <dbReference type="NCBI Taxonomy" id="439851"/>
    <lineage>
        <taxon>Bacteria</taxon>
        <taxon>Pseudomonadati</taxon>
        <taxon>Pseudomonadota</taxon>
        <taxon>Gammaproteobacteria</taxon>
        <taxon>Enterobacterales</taxon>
        <taxon>Enterobacteriaceae</taxon>
        <taxon>Salmonella</taxon>
    </lineage>
</organism>
<gene>
    <name evidence="2" type="primary">infB</name>
    <name type="ordered locus">SeD_A3643</name>
</gene>
<keyword id="KW-0963">Cytoplasm</keyword>
<keyword id="KW-0342">GTP-binding</keyword>
<keyword id="KW-0396">Initiation factor</keyword>
<keyword id="KW-0547">Nucleotide-binding</keyword>
<keyword id="KW-0648">Protein biosynthesis</keyword>
<evidence type="ECO:0000250" key="1"/>
<evidence type="ECO:0000255" key="2">
    <source>
        <dbReference type="HAMAP-Rule" id="MF_00100"/>
    </source>
</evidence>
<evidence type="ECO:0000256" key="3">
    <source>
        <dbReference type="SAM" id="MobiDB-lite"/>
    </source>
</evidence>
<protein>
    <recommendedName>
        <fullName evidence="2">Translation initiation factor IF-2</fullName>
    </recommendedName>
</protein>